<keyword id="KW-0687">Ribonucleoprotein</keyword>
<keyword id="KW-0689">Ribosomal protein</keyword>
<organism>
    <name type="scientific">Shewanella baltica (strain OS223)</name>
    <dbReference type="NCBI Taxonomy" id="407976"/>
    <lineage>
        <taxon>Bacteria</taxon>
        <taxon>Pseudomonadati</taxon>
        <taxon>Pseudomonadota</taxon>
        <taxon>Gammaproteobacteria</taxon>
        <taxon>Alteromonadales</taxon>
        <taxon>Shewanellaceae</taxon>
        <taxon>Shewanella</taxon>
    </lineage>
</organism>
<dbReference type="EMBL" id="CP001252">
    <property type="protein sequence ID" value="ACK48537.1"/>
    <property type="molecule type" value="Genomic_DNA"/>
</dbReference>
<dbReference type="RefSeq" id="WP_012588809.1">
    <property type="nucleotide sequence ID" value="NC_011663.1"/>
</dbReference>
<dbReference type="SMR" id="B8EBL3"/>
<dbReference type="KEGG" id="sbp:Sbal223_4064"/>
<dbReference type="HOGENOM" id="CLU_086499_3_2_6"/>
<dbReference type="Proteomes" id="UP000002507">
    <property type="component" value="Chromosome"/>
</dbReference>
<dbReference type="GO" id="GO:0022625">
    <property type="term" value="C:cytosolic large ribosomal subunit"/>
    <property type="evidence" value="ECO:0007669"/>
    <property type="project" value="TreeGrafter"/>
</dbReference>
<dbReference type="GO" id="GO:0003729">
    <property type="term" value="F:mRNA binding"/>
    <property type="evidence" value="ECO:0007669"/>
    <property type="project" value="TreeGrafter"/>
</dbReference>
<dbReference type="GO" id="GO:0003735">
    <property type="term" value="F:structural constituent of ribosome"/>
    <property type="evidence" value="ECO:0007669"/>
    <property type="project" value="InterPro"/>
</dbReference>
<dbReference type="GO" id="GO:0006412">
    <property type="term" value="P:translation"/>
    <property type="evidence" value="ECO:0007669"/>
    <property type="project" value="UniProtKB-UniRule"/>
</dbReference>
<dbReference type="CDD" id="cd00387">
    <property type="entry name" value="Ribosomal_L7_L12"/>
    <property type="match status" value="1"/>
</dbReference>
<dbReference type="FunFam" id="1.20.5.710:FF:000001">
    <property type="entry name" value="50S ribosomal protein L7/L12"/>
    <property type="match status" value="1"/>
</dbReference>
<dbReference type="FunFam" id="3.30.1390.10:FF:000001">
    <property type="entry name" value="50S ribosomal protein L7/L12"/>
    <property type="match status" value="1"/>
</dbReference>
<dbReference type="Gene3D" id="3.30.1390.10">
    <property type="match status" value="1"/>
</dbReference>
<dbReference type="Gene3D" id="1.20.5.710">
    <property type="entry name" value="Single helix bin"/>
    <property type="match status" value="1"/>
</dbReference>
<dbReference type="HAMAP" id="MF_00368">
    <property type="entry name" value="Ribosomal_bL12"/>
    <property type="match status" value="1"/>
</dbReference>
<dbReference type="InterPro" id="IPR000206">
    <property type="entry name" value="Ribosomal_bL12"/>
</dbReference>
<dbReference type="InterPro" id="IPR013823">
    <property type="entry name" value="Ribosomal_bL12_C"/>
</dbReference>
<dbReference type="InterPro" id="IPR014719">
    <property type="entry name" value="Ribosomal_bL12_C/ClpS-like"/>
</dbReference>
<dbReference type="InterPro" id="IPR008932">
    <property type="entry name" value="Ribosomal_bL12_oligo"/>
</dbReference>
<dbReference type="InterPro" id="IPR036235">
    <property type="entry name" value="Ribosomal_bL12_oligo_N_sf"/>
</dbReference>
<dbReference type="NCBIfam" id="TIGR00855">
    <property type="entry name" value="L12"/>
    <property type="match status" value="1"/>
</dbReference>
<dbReference type="PANTHER" id="PTHR45987">
    <property type="entry name" value="39S RIBOSOMAL PROTEIN L12"/>
    <property type="match status" value="1"/>
</dbReference>
<dbReference type="PANTHER" id="PTHR45987:SF4">
    <property type="entry name" value="LARGE RIBOSOMAL SUBUNIT PROTEIN BL12M"/>
    <property type="match status" value="1"/>
</dbReference>
<dbReference type="Pfam" id="PF00542">
    <property type="entry name" value="Ribosomal_L12"/>
    <property type="match status" value="1"/>
</dbReference>
<dbReference type="Pfam" id="PF16320">
    <property type="entry name" value="Ribosomal_L12_N"/>
    <property type="match status" value="1"/>
</dbReference>
<dbReference type="SUPFAM" id="SSF54736">
    <property type="entry name" value="ClpS-like"/>
    <property type="match status" value="1"/>
</dbReference>
<dbReference type="SUPFAM" id="SSF48300">
    <property type="entry name" value="Ribosomal protein L7/12, oligomerisation (N-terminal) domain"/>
    <property type="match status" value="1"/>
</dbReference>
<reference key="1">
    <citation type="submission" date="2008-12" db="EMBL/GenBank/DDBJ databases">
        <title>Complete sequence of chromosome of Shewanella baltica OS223.</title>
        <authorList>
            <consortium name="US DOE Joint Genome Institute"/>
            <person name="Lucas S."/>
            <person name="Copeland A."/>
            <person name="Lapidus A."/>
            <person name="Glavina del Rio T."/>
            <person name="Dalin E."/>
            <person name="Tice H."/>
            <person name="Bruce D."/>
            <person name="Goodwin L."/>
            <person name="Pitluck S."/>
            <person name="Chertkov O."/>
            <person name="Meincke L."/>
            <person name="Brettin T."/>
            <person name="Detter J.C."/>
            <person name="Han C."/>
            <person name="Kuske C.R."/>
            <person name="Larimer F."/>
            <person name="Land M."/>
            <person name="Hauser L."/>
            <person name="Kyrpides N."/>
            <person name="Ovchinnikova G."/>
            <person name="Brettar I."/>
            <person name="Rodrigues J."/>
            <person name="Konstantinidis K."/>
            <person name="Tiedje J."/>
        </authorList>
    </citation>
    <scope>NUCLEOTIDE SEQUENCE [LARGE SCALE GENOMIC DNA]</scope>
    <source>
        <strain>OS223</strain>
    </source>
</reference>
<comment type="function">
    <text evidence="1">Forms part of the ribosomal stalk which helps the ribosome interact with GTP-bound translation factors. Is thus essential for accurate translation.</text>
</comment>
<comment type="subunit">
    <text evidence="1">Homodimer. Part of the ribosomal stalk of the 50S ribosomal subunit. Forms a multimeric L10(L12)X complex, where L10 forms an elongated spine to which 2 to 4 L12 dimers bind in a sequential fashion. Binds GTP-bound translation factors.</text>
</comment>
<comment type="similarity">
    <text evidence="1">Belongs to the bacterial ribosomal protein bL12 family.</text>
</comment>
<feature type="chain" id="PRO_1000133860" description="Large ribosomal subunit protein bL12">
    <location>
        <begin position="1"/>
        <end position="121"/>
    </location>
</feature>
<protein>
    <recommendedName>
        <fullName evidence="1">Large ribosomal subunit protein bL12</fullName>
    </recommendedName>
    <alternativeName>
        <fullName evidence="2">50S ribosomal protein L7/L12</fullName>
    </alternativeName>
</protein>
<gene>
    <name evidence="1" type="primary">rplL</name>
    <name type="ordered locus">Sbal223_4064</name>
</gene>
<name>RL7_SHEB2</name>
<proteinExistence type="inferred from homology"/>
<evidence type="ECO:0000255" key="1">
    <source>
        <dbReference type="HAMAP-Rule" id="MF_00368"/>
    </source>
</evidence>
<evidence type="ECO:0000305" key="2"/>
<accession>B8EBL3</accession>
<sequence>MSITKDQILEAFAAMSVMEVVELIEAMEEKFGVSAAAAVVSGGAEAAVVEEQTEFNVVLTAHGDNKVAVIKAIRSATGLGLKEAKAMSEAAPVAVKEGVSKEEAEALKKELTEAGASVEIK</sequence>